<keyword id="KW-1185">Reference proteome</keyword>
<organism>
    <name type="scientific">Methanocaldococcus jannaschii (strain ATCC 43067 / DSM 2661 / JAL-1 / JCM 10045 / NBRC 100440)</name>
    <name type="common">Methanococcus jannaschii</name>
    <dbReference type="NCBI Taxonomy" id="243232"/>
    <lineage>
        <taxon>Archaea</taxon>
        <taxon>Methanobacteriati</taxon>
        <taxon>Methanobacteriota</taxon>
        <taxon>Methanomada group</taxon>
        <taxon>Methanococci</taxon>
        <taxon>Methanococcales</taxon>
        <taxon>Methanocaldococcaceae</taxon>
        <taxon>Methanocaldococcus</taxon>
    </lineage>
</organism>
<proteinExistence type="predicted"/>
<sequence>MPKTIKLTKTIALKSKPLTKTKIKIIENTIESYKEVLSIALDFGLKNNRKSHRKIREGIYEEIKSKLPKLPTHYIYTASQDASTRIKSFIAMKKRDKAYTSKPKIKNISLWLDDVLTNYRDFKNNIEKLFLIDKEGKKTLHLRLSTPNGRIVIPLKPHKQFFKLLNEGWGIKAGFKLRLNKEDGTITVLIPLEKEITINDSYKTVYALDFNLDNITYGNFENIELIKTDLGKLTEKYSNIMTNIQEKFSFKGIHKQDKPLKRKGFILLKNSVGG</sequence>
<protein>
    <recommendedName>
        <fullName>Uncharacterized protein MJ0857</fullName>
    </recommendedName>
</protein>
<name>Y857_METJA</name>
<gene>
    <name type="ordered locus">MJ0857</name>
</gene>
<dbReference type="EMBL" id="L77117">
    <property type="protein sequence ID" value="AAB98863.1"/>
    <property type="molecule type" value="Genomic_DNA"/>
</dbReference>
<dbReference type="PIR" id="A64407">
    <property type="entry name" value="A64407"/>
</dbReference>
<dbReference type="RefSeq" id="WP_010870372.1">
    <property type="nucleotide sequence ID" value="NC_000909.1"/>
</dbReference>
<dbReference type="STRING" id="243232.MJ_0857"/>
<dbReference type="PaxDb" id="243232-MJ_0857"/>
<dbReference type="EnsemblBacteria" id="AAB98863">
    <property type="protein sequence ID" value="AAB98863"/>
    <property type="gene ID" value="MJ_0857"/>
</dbReference>
<dbReference type="GeneID" id="27929974"/>
<dbReference type="KEGG" id="mja:MJ_0857"/>
<dbReference type="eggNOG" id="arCOG00679">
    <property type="taxonomic scope" value="Archaea"/>
</dbReference>
<dbReference type="HOGENOM" id="CLU_032903_17_0_2"/>
<dbReference type="InParanoid" id="Q58267"/>
<dbReference type="PhylomeDB" id="Q58267"/>
<dbReference type="Proteomes" id="UP000000805">
    <property type="component" value="Chromosome"/>
</dbReference>
<reference key="1">
    <citation type="journal article" date="1996" name="Science">
        <title>Complete genome sequence of the methanogenic archaeon, Methanococcus jannaschii.</title>
        <authorList>
            <person name="Bult C.J."/>
            <person name="White O."/>
            <person name="Olsen G.J."/>
            <person name="Zhou L."/>
            <person name="Fleischmann R.D."/>
            <person name="Sutton G.G."/>
            <person name="Blake J.A."/>
            <person name="FitzGerald L.M."/>
            <person name="Clayton R.A."/>
            <person name="Gocayne J.D."/>
            <person name="Kerlavage A.R."/>
            <person name="Dougherty B.A."/>
            <person name="Tomb J.-F."/>
            <person name="Adams M.D."/>
            <person name="Reich C.I."/>
            <person name="Overbeek R."/>
            <person name="Kirkness E.F."/>
            <person name="Weinstock K.G."/>
            <person name="Merrick J.M."/>
            <person name="Glodek A."/>
            <person name="Scott J.L."/>
            <person name="Geoghagen N.S.M."/>
            <person name="Weidman J.F."/>
            <person name="Fuhrmann J.L."/>
            <person name="Nguyen D."/>
            <person name="Utterback T.R."/>
            <person name="Kelley J.M."/>
            <person name="Peterson J.D."/>
            <person name="Sadow P.W."/>
            <person name="Hanna M.C."/>
            <person name="Cotton M.D."/>
            <person name="Roberts K.M."/>
            <person name="Hurst M.A."/>
            <person name="Kaine B.P."/>
            <person name="Borodovsky M."/>
            <person name="Klenk H.-P."/>
            <person name="Fraser C.M."/>
            <person name="Smith H.O."/>
            <person name="Woese C.R."/>
            <person name="Venter J.C."/>
        </authorList>
    </citation>
    <scope>NUCLEOTIDE SEQUENCE [LARGE SCALE GENOMIC DNA]</scope>
    <source>
        <strain>ATCC 43067 / DSM 2661 / JAL-1 / JCM 10045 / NBRC 100440</strain>
    </source>
</reference>
<accession>Q58267</accession>
<feature type="chain" id="PRO_0000107082" description="Uncharacterized protein MJ0857">
    <location>
        <begin position="1"/>
        <end position="274"/>
    </location>
</feature>